<name>CCSA_CHLSC</name>
<proteinExistence type="inferred from homology"/>
<geneLocation type="chloroplast"/>
<comment type="function">
    <text evidence="1">Required during biogenesis of c-type cytochromes (cytochrome c6 and cytochrome f) at the step of heme attachment.</text>
</comment>
<comment type="subunit">
    <text evidence="1">May interact with Ccs1.</text>
</comment>
<comment type="subcellular location">
    <subcellularLocation>
        <location evidence="1">Plastid</location>
        <location evidence="1">Chloroplast thylakoid membrane</location>
        <topology evidence="1">Multi-pass membrane protein</topology>
    </subcellularLocation>
</comment>
<comment type="similarity">
    <text evidence="1">Belongs to the CcmF/CycK/Ccl1/NrfE/CcsA family.</text>
</comment>
<organism>
    <name type="scientific">Chloranthus spicatus</name>
    <name type="common">Chulantree</name>
    <name type="synonym">Nigrina spicata</name>
    <dbReference type="NCBI Taxonomy" id="13006"/>
    <lineage>
        <taxon>Eukaryota</taxon>
        <taxon>Viridiplantae</taxon>
        <taxon>Streptophyta</taxon>
        <taxon>Embryophyta</taxon>
        <taxon>Tracheophyta</taxon>
        <taxon>Spermatophyta</taxon>
        <taxon>Magnoliopsida</taxon>
        <taxon>Chloranthales</taxon>
        <taxon>Chloranthaceae</taxon>
        <taxon>Chloranthus</taxon>
    </lineage>
</organism>
<feature type="chain" id="PRO_0000353740" description="Cytochrome c biogenesis protein CcsA">
    <location>
        <begin position="1"/>
        <end position="322"/>
    </location>
</feature>
<feature type="transmembrane region" description="Helical" evidence="1">
    <location>
        <begin position="9"/>
        <end position="29"/>
    </location>
</feature>
<feature type="transmembrane region" description="Helical" evidence="1">
    <location>
        <begin position="43"/>
        <end position="63"/>
    </location>
</feature>
<feature type="transmembrane region" description="Helical" evidence="1">
    <location>
        <begin position="70"/>
        <end position="90"/>
    </location>
</feature>
<feature type="transmembrane region" description="Helical" evidence="1">
    <location>
        <begin position="142"/>
        <end position="162"/>
    </location>
</feature>
<feature type="transmembrane region" description="Helical" evidence="1">
    <location>
        <begin position="226"/>
        <end position="246"/>
    </location>
</feature>
<feature type="transmembrane region" description="Helical" evidence="1">
    <location>
        <begin position="259"/>
        <end position="274"/>
    </location>
</feature>
<feature type="transmembrane region" description="Helical" evidence="1">
    <location>
        <begin position="287"/>
        <end position="307"/>
    </location>
</feature>
<reference key="1">
    <citation type="journal article" date="2007" name="Mol. Phylogenet. Evol.">
        <title>Phylogenetic and evolutionary implications of complete chloroplast genome sequences of four early-diverging angiosperms: Buxus (Buxaceae), Chloranthus (Chloranthaceae), Dioscorea (Dioscoreaceae), and Illicium (Schisandraceae).</title>
        <authorList>
            <person name="Hansen D.R."/>
            <person name="Dastidar S.G."/>
            <person name="Cai Z."/>
            <person name="Penaflor C."/>
            <person name="Kuehl J.V."/>
            <person name="Boore J.L."/>
            <person name="Jansen R.K."/>
        </authorList>
    </citation>
    <scope>NUCLEOTIDE SEQUENCE [LARGE SCALE GENOMIC DNA]</scope>
</reference>
<protein>
    <recommendedName>
        <fullName evidence="1">Cytochrome c biogenesis protein CcsA</fullName>
    </recommendedName>
</protein>
<gene>
    <name evidence="1" type="primary">ccsA</name>
</gene>
<accession>A6MMH8</accession>
<evidence type="ECO:0000255" key="1">
    <source>
        <dbReference type="HAMAP-Rule" id="MF_01391"/>
    </source>
</evidence>
<keyword id="KW-0150">Chloroplast</keyword>
<keyword id="KW-0201">Cytochrome c-type biogenesis</keyword>
<keyword id="KW-0472">Membrane</keyword>
<keyword id="KW-0934">Plastid</keyword>
<keyword id="KW-0793">Thylakoid</keyword>
<keyword id="KW-0812">Transmembrane</keyword>
<keyword id="KW-1133">Transmembrane helix</keyword>
<sequence>MIFATLEHILTHICFSIILIVITIHLITLLVHEIGLYNLSEKGMIATFFCITGLLVSRWIYSGHFPLSDLYESLIFLSWSFAIIHMVPKIRNHPNSLSTITAPSTIFTQGFTTSGLLTKMHQSTILVPALQSKWLMMHVSMMLLSYAALLCGSLLSIALLVITFRKNIDILGKSNHLFIGSFSFGKTQYLNEKRSLLHLQKASFLSFRNYHRYQLTHRLDYWSYRVISLGFTFLTIGILSGAVWANEAWGSYWNWDPKETWAFITWTIFAIYSHTRTNKSLQGANSAIVASMGFLIIWICYFGVNLLGIGLHSYGSFTLTSN</sequence>
<dbReference type="EMBL" id="EF380352">
    <property type="protein sequence ID" value="ABQ43315.1"/>
    <property type="molecule type" value="Genomic_DNA"/>
</dbReference>
<dbReference type="RefSeq" id="YP_001294154.1">
    <property type="nucleotide sequence ID" value="NC_009598.1"/>
</dbReference>
<dbReference type="SMR" id="A6MMH8"/>
<dbReference type="GeneID" id="5236423"/>
<dbReference type="GO" id="GO:0009535">
    <property type="term" value="C:chloroplast thylakoid membrane"/>
    <property type="evidence" value="ECO:0007669"/>
    <property type="project" value="UniProtKB-SubCell"/>
</dbReference>
<dbReference type="GO" id="GO:0005886">
    <property type="term" value="C:plasma membrane"/>
    <property type="evidence" value="ECO:0007669"/>
    <property type="project" value="TreeGrafter"/>
</dbReference>
<dbReference type="GO" id="GO:0020037">
    <property type="term" value="F:heme binding"/>
    <property type="evidence" value="ECO:0007669"/>
    <property type="project" value="InterPro"/>
</dbReference>
<dbReference type="GO" id="GO:0017004">
    <property type="term" value="P:cytochrome complex assembly"/>
    <property type="evidence" value="ECO:0007669"/>
    <property type="project" value="UniProtKB-UniRule"/>
</dbReference>
<dbReference type="HAMAP" id="MF_01391">
    <property type="entry name" value="CytC_CcsA"/>
    <property type="match status" value="1"/>
</dbReference>
<dbReference type="InterPro" id="IPR002541">
    <property type="entry name" value="Cyt_c_assembly"/>
</dbReference>
<dbReference type="InterPro" id="IPR017562">
    <property type="entry name" value="Cyt_c_biogenesis_CcsA"/>
</dbReference>
<dbReference type="InterPro" id="IPR045062">
    <property type="entry name" value="Cyt_c_biogenesis_CcsA/CcmC"/>
</dbReference>
<dbReference type="NCBIfam" id="TIGR03144">
    <property type="entry name" value="cytochr_II_ccsB"/>
    <property type="match status" value="1"/>
</dbReference>
<dbReference type="PANTHER" id="PTHR30071:SF1">
    <property type="entry name" value="CYTOCHROME B_B6 PROTEIN-RELATED"/>
    <property type="match status" value="1"/>
</dbReference>
<dbReference type="PANTHER" id="PTHR30071">
    <property type="entry name" value="HEME EXPORTER PROTEIN C"/>
    <property type="match status" value="1"/>
</dbReference>
<dbReference type="Pfam" id="PF01578">
    <property type="entry name" value="Cytochrom_C_asm"/>
    <property type="match status" value="1"/>
</dbReference>